<dbReference type="EC" id="5.4.2.11" evidence="1"/>
<dbReference type="EMBL" id="CP000260">
    <property type="protein sequence ID" value="ABF34300.1"/>
    <property type="molecule type" value="Genomic_DNA"/>
</dbReference>
<dbReference type="SMR" id="Q1JG44"/>
<dbReference type="KEGG" id="sph:MGAS10270_Spy1235"/>
<dbReference type="HOGENOM" id="CLU_033323_1_5_9"/>
<dbReference type="UniPathway" id="UPA00109">
    <property type="reaction ID" value="UER00186"/>
</dbReference>
<dbReference type="Proteomes" id="UP000002436">
    <property type="component" value="Chromosome"/>
</dbReference>
<dbReference type="GO" id="GO:0004619">
    <property type="term" value="F:phosphoglycerate mutase activity"/>
    <property type="evidence" value="ECO:0007669"/>
    <property type="project" value="UniProtKB-EC"/>
</dbReference>
<dbReference type="GO" id="GO:0006094">
    <property type="term" value="P:gluconeogenesis"/>
    <property type="evidence" value="ECO:0007669"/>
    <property type="project" value="UniProtKB-UniRule"/>
</dbReference>
<dbReference type="GO" id="GO:0006096">
    <property type="term" value="P:glycolytic process"/>
    <property type="evidence" value="ECO:0007669"/>
    <property type="project" value="UniProtKB-UniRule"/>
</dbReference>
<dbReference type="CDD" id="cd07067">
    <property type="entry name" value="HP_PGM_like"/>
    <property type="match status" value="1"/>
</dbReference>
<dbReference type="FunFam" id="3.40.50.1240:FF:000003">
    <property type="entry name" value="2,3-bisphosphoglycerate-dependent phosphoglycerate mutase"/>
    <property type="match status" value="1"/>
</dbReference>
<dbReference type="Gene3D" id="3.40.50.1240">
    <property type="entry name" value="Phosphoglycerate mutase-like"/>
    <property type="match status" value="1"/>
</dbReference>
<dbReference type="HAMAP" id="MF_01039">
    <property type="entry name" value="PGAM_GpmA"/>
    <property type="match status" value="1"/>
</dbReference>
<dbReference type="InterPro" id="IPR013078">
    <property type="entry name" value="His_Pase_superF_clade-1"/>
</dbReference>
<dbReference type="InterPro" id="IPR029033">
    <property type="entry name" value="His_PPase_superfam"/>
</dbReference>
<dbReference type="InterPro" id="IPR005952">
    <property type="entry name" value="Phosphogly_mut1"/>
</dbReference>
<dbReference type="NCBIfam" id="TIGR01258">
    <property type="entry name" value="pgm_1"/>
    <property type="match status" value="1"/>
</dbReference>
<dbReference type="NCBIfam" id="NF010713">
    <property type="entry name" value="PRK14115.1"/>
    <property type="match status" value="1"/>
</dbReference>
<dbReference type="NCBIfam" id="NF010715">
    <property type="entry name" value="PRK14117.1"/>
    <property type="match status" value="1"/>
</dbReference>
<dbReference type="PANTHER" id="PTHR11931">
    <property type="entry name" value="PHOSPHOGLYCERATE MUTASE"/>
    <property type="match status" value="1"/>
</dbReference>
<dbReference type="Pfam" id="PF00300">
    <property type="entry name" value="His_Phos_1"/>
    <property type="match status" value="1"/>
</dbReference>
<dbReference type="PIRSF" id="PIRSF000709">
    <property type="entry name" value="6PFK_2-Ptase"/>
    <property type="match status" value="1"/>
</dbReference>
<dbReference type="SMART" id="SM00855">
    <property type="entry name" value="PGAM"/>
    <property type="match status" value="1"/>
</dbReference>
<dbReference type="SUPFAM" id="SSF53254">
    <property type="entry name" value="Phosphoglycerate mutase-like"/>
    <property type="match status" value="1"/>
</dbReference>
<sequence length="231" mass="26036">MVKLVFARHGESEWNKANLFTGWADVDLSEKGTQQAIDAGKLIKEAGIEFDLAFTSVLTRAIKTTNLALENAGQLWVPTEKSWRLNERHYGALTGKNKAEAAEQFGDEQVHIWRRSYDVLPPAMAKDDEYSAHKDRRYADLDPALIPDAENLKVTLERAMPYWEEKIAPALLDGKNVFVGAHGNSIRALVKHIKGLSDDEIMDVEIPNFPPLVFELDEKLNIVKEYYLGGE</sequence>
<accession>Q1JG44</accession>
<gene>
    <name evidence="1" type="primary">gpmA</name>
    <name type="ordered locus">MGAS10270_Spy1235</name>
</gene>
<feature type="chain" id="PRO_1000064107" description="2,3-bisphosphoglycerate-dependent phosphoglycerate mutase">
    <location>
        <begin position="1"/>
        <end position="231"/>
    </location>
</feature>
<feature type="active site" description="Tele-phosphohistidine intermediate" evidence="1">
    <location>
        <position position="9"/>
    </location>
</feature>
<feature type="active site" description="Proton donor/acceptor" evidence="1">
    <location>
        <position position="87"/>
    </location>
</feature>
<feature type="binding site" evidence="1">
    <location>
        <begin position="8"/>
        <end position="15"/>
    </location>
    <ligand>
        <name>substrate</name>
    </ligand>
</feature>
<feature type="binding site" evidence="1">
    <location>
        <begin position="21"/>
        <end position="22"/>
    </location>
    <ligand>
        <name>substrate</name>
    </ligand>
</feature>
<feature type="binding site" evidence="1">
    <location>
        <position position="60"/>
    </location>
    <ligand>
        <name>substrate</name>
    </ligand>
</feature>
<feature type="binding site" evidence="1">
    <location>
        <begin position="87"/>
        <end position="90"/>
    </location>
    <ligand>
        <name>substrate</name>
    </ligand>
</feature>
<feature type="binding site" evidence="1">
    <location>
        <position position="98"/>
    </location>
    <ligand>
        <name>substrate</name>
    </ligand>
</feature>
<feature type="binding site" evidence="1">
    <location>
        <begin position="114"/>
        <end position="115"/>
    </location>
    <ligand>
        <name>substrate</name>
    </ligand>
</feature>
<feature type="binding site" evidence="1">
    <location>
        <begin position="183"/>
        <end position="184"/>
    </location>
    <ligand>
        <name>substrate</name>
    </ligand>
</feature>
<feature type="site" description="Transition state stabilizer" evidence="1">
    <location>
        <position position="182"/>
    </location>
</feature>
<organism>
    <name type="scientific">Streptococcus pyogenes serotype M2 (strain MGAS10270)</name>
    <dbReference type="NCBI Taxonomy" id="370552"/>
    <lineage>
        <taxon>Bacteria</taxon>
        <taxon>Bacillati</taxon>
        <taxon>Bacillota</taxon>
        <taxon>Bacilli</taxon>
        <taxon>Lactobacillales</taxon>
        <taxon>Streptococcaceae</taxon>
        <taxon>Streptococcus</taxon>
    </lineage>
</organism>
<proteinExistence type="inferred from homology"/>
<name>GPMA_STRPD</name>
<evidence type="ECO:0000255" key="1">
    <source>
        <dbReference type="HAMAP-Rule" id="MF_01039"/>
    </source>
</evidence>
<comment type="function">
    <text evidence="1">Catalyzes the interconversion of 2-phosphoglycerate and 3-phosphoglycerate.</text>
</comment>
<comment type="catalytic activity">
    <reaction evidence="1">
        <text>(2R)-2-phosphoglycerate = (2R)-3-phosphoglycerate</text>
        <dbReference type="Rhea" id="RHEA:15901"/>
        <dbReference type="ChEBI" id="CHEBI:58272"/>
        <dbReference type="ChEBI" id="CHEBI:58289"/>
        <dbReference type="EC" id="5.4.2.11"/>
    </reaction>
</comment>
<comment type="pathway">
    <text evidence="1">Carbohydrate degradation; glycolysis; pyruvate from D-glyceraldehyde 3-phosphate: step 3/5.</text>
</comment>
<comment type="similarity">
    <text evidence="1">Belongs to the phosphoglycerate mutase family. BPG-dependent PGAM subfamily.</text>
</comment>
<protein>
    <recommendedName>
        <fullName evidence="1">2,3-bisphosphoglycerate-dependent phosphoglycerate mutase</fullName>
        <shortName evidence="1">BPG-dependent PGAM</shortName>
        <shortName evidence="1">PGAM</shortName>
        <shortName evidence="1">Phosphoglyceromutase</shortName>
        <shortName evidence="1">dPGM</shortName>
        <ecNumber evidence="1">5.4.2.11</ecNumber>
    </recommendedName>
</protein>
<reference key="1">
    <citation type="journal article" date="2006" name="Proc. Natl. Acad. Sci. U.S.A.">
        <title>Molecular genetic anatomy of inter- and intraserotype variation in the human bacterial pathogen group A Streptococcus.</title>
        <authorList>
            <person name="Beres S.B."/>
            <person name="Richter E.W."/>
            <person name="Nagiec M.J."/>
            <person name="Sumby P."/>
            <person name="Porcella S.F."/>
            <person name="DeLeo F.R."/>
            <person name="Musser J.M."/>
        </authorList>
    </citation>
    <scope>NUCLEOTIDE SEQUENCE [LARGE SCALE GENOMIC DNA]</scope>
    <source>
        <strain>MGAS10270</strain>
    </source>
</reference>
<keyword id="KW-0312">Gluconeogenesis</keyword>
<keyword id="KW-0324">Glycolysis</keyword>
<keyword id="KW-0413">Isomerase</keyword>